<comment type="function">
    <text evidence="1">Regulator of peptidoglycan synthesis that is essential for the function of penicillin-binding protein 1A (PBP1a).</text>
</comment>
<comment type="subunit">
    <text evidence="1">Interacts with PBP1a.</text>
</comment>
<comment type="subcellular location">
    <subcellularLocation>
        <location evidence="1">Cell outer membrane</location>
        <topology evidence="1">Lipid-anchor</topology>
        <orientation evidence="1">Periplasmic side</orientation>
    </subcellularLocation>
</comment>
<comment type="similarity">
    <text evidence="1">Belongs to the LpoA family.</text>
</comment>
<comment type="sequence caution" evidence="3">
    <conflict type="erroneous initiation">
        <sequence resource="EMBL-CDS" id="ADA75514"/>
    </conflict>
    <text>Extended N-terminus.</text>
</comment>
<accession>D2A869</accession>
<name>LPOA_SHIF2</name>
<reference key="1">
    <citation type="journal article" date="2010" name="J. Clin. Microbiol.">
        <title>Emergence of a new multidrug-resistant serotype X variant in an epidemic clone of Shigella flexneri.</title>
        <authorList>
            <person name="Ye C."/>
            <person name="Lan R."/>
            <person name="Xia S."/>
            <person name="Zhang J."/>
            <person name="Sun Q."/>
            <person name="Zhang S."/>
            <person name="Jing H."/>
            <person name="Wang L."/>
            <person name="Li Z."/>
            <person name="Zhou Z."/>
            <person name="Zhao A."/>
            <person name="Cui Z."/>
            <person name="Cao J."/>
            <person name="Jin D."/>
            <person name="Huang L."/>
            <person name="Wang Y."/>
            <person name="Luo X."/>
            <person name="Bai X."/>
            <person name="Wang Y."/>
            <person name="Wang P."/>
            <person name="Xu Q."/>
            <person name="Xu J."/>
        </authorList>
    </citation>
    <scope>NUCLEOTIDE SEQUENCE [LARGE SCALE GENOMIC DNA]</scope>
    <source>
        <strain>2002017</strain>
    </source>
</reference>
<dbReference type="EMBL" id="CP001383">
    <property type="protein sequence ID" value="ADA75514.1"/>
    <property type="status" value="ALT_INIT"/>
    <property type="molecule type" value="Genomic_DNA"/>
</dbReference>
<dbReference type="RefSeq" id="WP_000249126.1">
    <property type="nucleotide sequence ID" value="NC_017328.1"/>
</dbReference>
<dbReference type="BMRB" id="D2A869"/>
<dbReference type="SMR" id="D2A869"/>
<dbReference type="KEGG" id="sfe:SFxv_3500"/>
<dbReference type="PATRIC" id="fig|591020.3.peg.3771"/>
<dbReference type="HOGENOM" id="CLU_026091_1_1_6"/>
<dbReference type="GO" id="GO:0031241">
    <property type="term" value="C:periplasmic side of cell outer membrane"/>
    <property type="evidence" value="ECO:0007669"/>
    <property type="project" value="UniProtKB-UniRule"/>
</dbReference>
<dbReference type="GO" id="GO:0042597">
    <property type="term" value="C:periplasmic space"/>
    <property type="evidence" value="ECO:0007669"/>
    <property type="project" value="InterPro"/>
</dbReference>
<dbReference type="GO" id="GO:0030234">
    <property type="term" value="F:enzyme regulator activity"/>
    <property type="evidence" value="ECO:0007669"/>
    <property type="project" value="UniProtKB-UniRule"/>
</dbReference>
<dbReference type="GO" id="GO:0004553">
    <property type="term" value="F:hydrolase activity, hydrolyzing O-glycosyl compounds"/>
    <property type="evidence" value="ECO:0007669"/>
    <property type="project" value="InterPro"/>
</dbReference>
<dbReference type="GO" id="GO:0009252">
    <property type="term" value="P:peptidoglycan biosynthetic process"/>
    <property type="evidence" value="ECO:0007669"/>
    <property type="project" value="UniProtKB-UniRule"/>
</dbReference>
<dbReference type="GO" id="GO:0008360">
    <property type="term" value="P:regulation of cell shape"/>
    <property type="evidence" value="ECO:0007669"/>
    <property type="project" value="UniProtKB-KW"/>
</dbReference>
<dbReference type="CDD" id="cd06339">
    <property type="entry name" value="PBP1_YraM_LppC_lipoprotein-like"/>
    <property type="match status" value="1"/>
</dbReference>
<dbReference type="FunFam" id="1.25.40.10:FF:000199">
    <property type="entry name" value="Penicillin-binding protein activator LpoA"/>
    <property type="match status" value="1"/>
</dbReference>
<dbReference type="FunFam" id="1.25.40.650:FF:000001">
    <property type="entry name" value="Penicillin-binding protein activator LpoA"/>
    <property type="match status" value="1"/>
</dbReference>
<dbReference type="Gene3D" id="1.25.40.650">
    <property type="match status" value="1"/>
</dbReference>
<dbReference type="Gene3D" id="3.40.50.2300">
    <property type="match status" value="2"/>
</dbReference>
<dbReference type="Gene3D" id="1.25.40.10">
    <property type="entry name" value="Tetratricopeptide repeat domain"/>
    <property type="match status" value="1"/>
</dbReference>
<dbReference type="HAMAP" id="MF_01890">
    <property type="entry name" value="LpoA"/>
    <property type="match status" value="1"/>
</dbReference>
<dbReference type="InterPro" id="IPR007443">
    <property type="entry name" value="LpoA"/>
</dbReference>
<dbReference type="InterPro" id="IPR008939">
    <property type="entry name" value="Lytic_TGlycosylase_superhlx_U"/>
</dbReference>
<dbReference type="InterPro" id="IPR028082">
    <property type="entry name" value="Peripla_BP_I"/>
</dbReference>
<dbReference type="InterPro" id="IPR011990">
    <property type="entry name" value="TPR-like_helical_dom_sf"/>
</dbReference>
<dbReference type="PANTHER" id="PTHR38038">
    <property type="entry name" value="PENICILLIN-BINDING PROTEIN ACTIVATOR LPOA"/>
    <property type="match status" value="1"/>
</dbReference>
<dbReference type="PANTHER" id="PTHR38038:SF1">
    <property type="entry name" value="PENICILLIN-BINDING PROTEIN ACTIVATOR LPOA"/>
    <property type="match status" value="1"/>
</dbReference>
<dbReference type="Pfam" id="PF04348">
    <property type="entry name" value="LppC"/>
    <property type="match status" value="2"/>
</dbReference>
<dbReference type="SUPFAM" id="SSF48435">
    <property type="entry name" value="Bacterial muramidases"/>
    <property type="match status" value="1"/>
</dbReference>
<dbReference type="SUPFAM" id="SSF53822">
    <property type="entry name" value="Periplasmic binding protein-like I"/>
    <property type="match status" value="1"/>
</dbReference>
<sequence length="678" mass="72755">MVPSTFSRLKAARCLPVVLAALIFAGCGTHTPDQSTAYMQGTAQADSAFYLQQMQQSSDDTRINWQLLAIRALVKEGKTGQAVELFNQLPQELNDSQRREKTLLAAEIKLAQKDFAGAQNLLAKITPADLEQNQQARYWQAKIDASQGRPSIDLLRALIAQEPLLGAKEKQQNIDATWQALSSMTQEQANTLVINADENILQGWLDLQRVWFDNRNDPDMMKAGIADWQKRYPNNPGAKMLPTQLVNVKAFKPASTNKIALLLPLNGQAAVFGRTIQQGFEAAKNIGTQPVAAQVAAAPAADVAEQPQPQTADSVASPAQASVSDLTGDQPAAQPVPVSAPATSTAAVSAPANPSAELKIYDTSSQPLSQILSQVQQDGASIVVGPLLKNNVEELLKSNTPLNVLALNQPENIENRVNICYFALSPEDEARDAARHIRDQGKQAPLVLIPRSALGDRVANAFAQEWQKLGGGTVLQQKFGSTSELRAGVNGGSGIALTGSPITPRATTDSGMTTNNPTLQTTPTDDQFTNNGGRVDAVYIVATPGEIAFIKPMIAMRNGSQSGATLYASSRSAQGTAGPDFRLEMEGLQYSEIPMLAGGNLPLMQQALSAVNNDYSLARMYAMGVDAWSLANHFSQMRQVQGFEINGNTGSLTANPDCVINRKLSWLQYQQGQVVPAS</sequence>
<gene>
    <name evidence="1" type="primary">lpoA</name>
    <name type="ordered locus">SFxv_3500</name>
</gene>
<evidence type="ECO:0000255" key="1">
    <source>
        <dbReference type="HAMAP-Rule" id="MF_01890"/>
    </source>
</evidence>
<evidence type="ECO:0000256" key="2">
    <source>
        <dbReference type="SAM" id="MobiDB-lite"/>
    </source>
</evidence>
<evidence type="ECO:0000305" key="3"/>
<proteinExistence type="inferred from homology"/>
<organism>
    <name type="scientific">Shigella flexneri serotype X (strain 2002017)</name>
    <dbReference type="NCBI Taxonomy" id="591020"/>
    <lineage>
        <taxon>Bacteria</taxon>
        <taxon>Pseudomonadati</taxon>
        <taxon>Pseudomonadota</taxon>
        <taxon>Gammaproteobacteria</taxon>
        <taxon>Enterobacterales</taxon>
        <taxon>Enterobacteriaceae</taxon>
        <taxon>Shigella</taxon>
    </lineage>
</organism>
<keyword id="KW-0998">Cell outer membrane</keyword>
<keyword id="KW-0133">Cell shape</keyword>
<keyword id="KW-0449">Lipoprotein</keyword>
<keyword id="KW-0472">Membrane</keyword>
<keyword id="KW-0564">Palmitate</keyword>
<keyword id="KW-0573">Peptidoglycan synthesis</keyword>
<keyword id="KW-0732">Signal</keyword>
<feature type="signal peptide" evidence="1">
    <location>
        <begin position="1"/>
        <end position="26"/>
    </location>
</feature>
<feature type="chain" id="PRO_0000405943" description="Penicillin-binding protein activator LpoA">
    <location>
        <begin position="27"/>
        <end position="678"/>
    </location>
</feature>
<feature type="region of interest" description="Disordered" evidence="2">
    <location>
        <begin position="300"/>
        <end position="340"/>
    </location>
</feature>
<feature type="region of interest" description="Disordered" evidence="2">
    <location>
        <begin position="496"/>
        <end position="528"/>
    </location>
</feature>
<feature type="compositionally biased region" description="Low complexity" evidence="2">
    <location>
        <begin position="300"/>
        <end position="310"/>
    </location>
</feature>
<feature type="compositionally biased region" description="Polar residues" evidence="2">
    <location>
        <begin position="311"/>
        <end position="327"/>
    </location>
</feature>
<feature type="compositionally biased region" description="Low complexity" evidence="2">
    <location>
        <begin position="330"/>
        <end position="340"/>
    </location>
</feature>
<feature type="compositionally biased region" description="Low complexity" evidence="2">
    <location>
        <begin position="513"/>
        <end position="528"/>
    </location>
</feature>
<feature type="lipid moiety-binding region" description="N-palmitoyl cysteine" evidence="1">
    <location>
        <position position="27"/>
    </location>
</feature>
<feature type="lipid moiety-binding region" description="S-diacylglycerol cysteine" evidence="1">
    <location>
        <position position="27"/>
    </location>
</feature>
<protein>
    <recommendedName>
        <fullName evidence="1">Penicillin-binding protein activator LpoA</fullName>
        <shortName evidence="1">PBP activator LpoA</shortName>
    </recommendedName>
</protein>